<gene>
    <name type="ordered locus">Memar_0903</name>
</gene>
<dbReference type="EC" id="3.2.2.-" evidence="1"/>
<dbReference type="EMBL" id="CP000562">
    <property type="protein sequence ID" value="ABN56836.1"/>
    <property type="molecule type" value="Genomic_DNA"/>
</dbReference>
<dbReference type="RefSeq" id="WP_011843747.1">
    <property type="nucleotide sequence ID" value="NC_009051.1"/>
</dbReference>
<dbReference type="SMR" id="A3CTY6"/>
<dbReference type="STRING" id="368407.Memar_0903"/>
<dbReference type="GeneID" id="4847716"/>
<dbReference type="KEGG" id="mem:Memar_0903"/>
<dbReference type="eggNOG" id="arCOG04295">
    <property type="taxonomic scope" value="Archaea"/>
</dbReference>
<dbReference type="HOGENOM" id="CLU_060471_4_1_2"/>
<dbReference type="OrthoDB" id="31217at2157"/>
<dbReference type="Proteomes" id="UP000002146">
    <property type="component" value="Chromosome"/>
</dbReference>
<dbReference type="GO" id="GO:0003905">
    <property type="term" value="F:alkylbase DNA N-glycosylase activity"/>
    <property type="evidence" value="ECO:0007669"/>
    <property type="project" value="InterPro"/>
</dbReference>
<dbReference type="GO" id="GO:0003677">
    <property type="term" value="F:DNA binding"/>
    <property type="evidence" value="ECO:0007669"/>
    <property type="project" value="InterPro"/>
</dbReference>
<dbReference type="GO" id="GO:0006284">
    <property type="term" value="P:base-excision repair"/>
    <property type="evidence" value="ECO:0007669"/>
    <property type="project" value="InterPro"/>
</dbReference>
<dbReference type="CDD" id="cd00540">
    <property type="entry name" value="AAG"/>
    <property type="match status" value="1"/>
</dbReference>
<dbReference type="FunFam" id="3.10.300.10:FF:000001">
    <property type="entry name" value="Putative 3-methyladenine DNA glycosylase"/>
    <property type="match status" value="1"/>
</dbReference>
<dbReference type="Gene3D" id="3.10.300.10">
    <property type="entry name" value="Methylpurine-DNA glycosylase (MPG)"/>
    <property type="match status" value="1"/>
</dbReference>
<dbReference type="HAMAP" id="MF_00527">
    <property type="entry name" value="3MGH"/>
    <property type="match status" value="1"/>
</dbReference>
<dbReference type="InterPro" id="IPR011034">
    <property type="entry name" value="Formyl_transferase-like_C_sf"/>
</dbReference>
<dbReference type="InterPro" id="IPR003180">
    <property type="entry name" value="MPG"/>
</dbReference>
<dbReference type="InterPro" id="IPR036995">
    <property type="entry name" value="MPG_sf"/>
</dbReference>
<dbReference type="NCBIfam" id="TIGR00567">
    <property type="entry name" value="3mg"/>
    <property type="match status" value="1"/>
</dbReference>
<dbReference type="NCBIfam" id="NF002003">
    <property type="entry name" value="PRK00802.1-3"/>
    <property type="match status" value="1"/>
</dbReference>
<dbReference type="PANTHER" id="PTHR10429">
    <property type="entry name" value="DNA-3-METHYLADENINE GLYCOSYLASE"/>
    <property type="match status" value="1"/>
</dbReference>
<dbReference type="PANTHER" id="PTHR10429:SF0">
    <property type="entry name" value="DNA-3-METHYLADENINE GLYCOSYLASE"/>
    <property type="match status" value="1"/>
</dbReference>
<dbReference type="Pfam" id="PF02245">
    <property type="entry name" value="Pur_DNA_glyco"/>
    <property type="match status" value="1"/>
</dbReference>
<dbReference type="SUPFAM" id="SSF50486">
    <property type="entry name" value="FMT C-terminal domain-like"/>
    <property type="match status" value="1"/>
</dbReference>
<name>3MGH_METMJ</name>
<organism>
    <name type="scientific">Methanoculleus marisnigri (strain ATCC 35101 / DSM 1498 / JR1)</name>
    <dbReference type="NCBI Taxonomy" id="368407"/>
    <lineage>
        <taxon>Archaea</taxon>
        <taxon>Methanobacteriati</taxon>
        <taxon>Methanobacteriota</taxon>
        <taxon>Stenosarchaea group</taxon>
        <taxon>Methanomicrobia</taxon>
        <taxon>Methanomicrobiales</taxon>
        <taxon>Methanomicrobiaceae</taxon>
        <taxon>Methanoculleus</taxon>
    </lineage>
</organism>
<comment type="similarity">
    <text evidence="1">Belongs to the DNA glycosylase MPG family.</text>
</comment>
<evidence type="ECO:0000255" key="1">
    <source>
        <dbReference type="HAMAP-Rule" id="MF_00527"/>
    </source>
</evidence>
<accession>A3CTY6</accession>
<keyword id="KW-0227">DNA damage</keyword>
<keyword id="KW-0234">DNA repair</keyword>
<keyword id="KW-0378">Hydrolase</keyword>
<reference key="1">
    <citation type="journal article" date="2009" name="Stand. Genomic Sci.">
        <title>Complete genome sequence of Methanoculleus marisnigri Romesser et al. 1981 type strain JR1.</title>
        <authorList>
            <person name="Anderson I.J."/>
            <person name="Sieprawska-Lupa M."/>
            <person name="Lapidus A."/>
            <person name="Nolan M."/>
            <person name="Copeland A."/>
            <person name="Glavina Del Rio T."/>
            <person name="Tice H."/>
            <person name="Dalin E."/>
            <person name="Barry K."/>
            <person name="Saunders E."/>
            <person name="Han C."/>
            <person name="Brettin T."/>
            <person name="Detter J.C."/>
            <person name="Bruce D."/>
            <person name="Mikhailova N."/>
            <person name="Pitluck S."/>
            <person name="Hauser L."/>
            <person name="Land M."/>
            <person name="Lucas S."/>
            <person name="Richardson P."/>
            <person name="Whitman W.B."/>
            <person name="Kyrpides N.C."/>
        </authorList>
    </citation>
    <scope>NUCLEOTIDE SEQUENCE [LARGE SCALE GENOMIC DNA]</scope>
    <source>
        <strain>ATCC 35101 / DSM 1498 / JR1</strain>
    </source>
</reference>
<proteinExistence type="inferred from homology"/>
<protein>
    <recommendedName>
        <fullName evidence="1">Putative 3-methyladenine DNA glycosylase</fullName>
        <ecNumber evidence="1">3.2.2.-</ecNumber>
    </recommendedName>
</protein>
<sequence>MTLPAAFYERDTVTVAKDLLGCLLVHREEVTTAGRIVEVEAYLRGDPAAHSYRGTTKRNRVMFGPAGHAYVYRIYGLHTCVNVVTGTEGAGEAVLVRALEPVVGLDLMQARRGTDDPLSLASGPGKLTQALGITMDLNGTSLRDGPLQVRSPANPPELQPENIVQTTRVGITKAADLPLRFYLKGSRYVSRR</sequence>
<feature type="chain" id="PRO_1000050993" description="Putative 3-methyladenine DNA glycosylase">
    <location>
        <begin position="1"/>
        <end position="192"/>
    </location>
</feature>